<proteinExistence type="inferred from homology"/>
<sequence length="198" mass="21416">MIEQIKANFTESIQTKIAASEILPEHIEKAAYMIVEALIRGNKVLSCGNGGSAGDAQHFASNMLNRYERDRPSLPAIALSTDTSTITSIANDYSYDEIFAKQVRALGQPGDILLAISTSGNSRNVIAAMEAALSRDMTIVALTGKDGGEMAGFLSEHDVEIRVPSNRTARIQEVHLLVIHNLCECIDDSLFPADHGDE</sequence>
<comment type="function">
    <text evidence="1">Catalyzes the isomerization of sedoheptulose 7-phosphate in D-glycero-D-manno-heptose 7-phosphate.</text>
</comment>
<comment type="catalytic activity">
    <reaction evidence="1">
        <text>2 D-sedoheptulose 7-phosphate = D-glycero-alpha-D-manno-heptose 7-phosphate + D-glycero-beta-D-manno-heptose 7-phosphate</text>
        <dbReference type="Rhea" id="RHEA:27489"/>
        <dbReference type="ChEBI" id="CHEBI:57483"/>
        <dbReference type="ChEBI" id="CHEBI:60203"/>
        <dbReference type="ChEBI" id="CHEBI:60204"/>
        <dbReference type="EC" id="5.3.1.28"/>
    </reaction>
</comment>
<comment type="cofactor">
    <cofactor evidence="1">
        <name>Zn(2+)</name>
        <dbReference type="ChEBI" id="CHEBI:29105"/>
    </cofactor>
    <text evidence="1">Binds 1 zinc ion per subunit.</text>
</comment>
<comment type="pathway">
    <text evidence="1">Carbohydrate biosynthesis; D-glycero-D-manno-heptose 7-phosphate biosynthesis; D-glycero-alpha-D-manno-heptose 7-phosphate and D-glycero-beta-D-manno-heptose 7-phosphate from sedoheptulose 7-phosphate: step 1/1.</text>
</comment>
<comment type="subunit">
    <text evidence="1">Homotetramer.</text>
</comment>
<comment type="subcellular location">
    <subcellularLocation>
        <location evidence="1">Cytoplasm</location>
    </subcellularLocation>
</comment>
<comment type="miscellaneous">
    <text evidence="1">The reaction produces a racemic mixture of D-glycero-alpha-D-manno-heptose 7-phosphate and D-glycero-beta-D-manno-heptose 7-phosphate.</text>
</comment>
<comment type="similarity">
    <text evidence="1">Belongs to the SIS family. GmhA subfamily.</text>
</comment>
<name>GMHA_ALTMD</name>
<feature type="chain" id="PRO_1000196989" description="Phosphoheptose isomerase">
    <location>
        <begin position="1"/>
        <end position="198"/>
    </location>
</feature>
<feature type="domain" description="SIS" evidence="1">
    <location>
        <begin position="34"/>
        <end position="196"/>
    </location>
</feature>
<feature type="binding site" evidence="1">
    <location>
        <begin position="49"/>
        <end position="51"/>
    </location>
    <ligand>
        <name>substrate</name>
    </ligand>
</feature>
<feature type="binding site" evidence="1">
    <location>
        <position position="58"/>
    </location>
    <ligand>
        <name>Zn(2+)</name>
        <dbReference type="ChEBI" id="CHEBI:29105"/>
    </ligand>
</feature>
<feature type="binding site" evidence="1">
    <location>
        <position position="62"/>
    </location>
    <ligand>
        <name>substrate</name>
    </ligand>
</feature>
<feature type="binding site" evidence="1">
    <location>
        <position position="62"/>
    </location>
    <ligand>
        <name>Zn(2+)</name>
        <dbReference type="ChEBI" id="CHEBI:29105"/>
    </ligand>
</feature>
<feature type="binding site" evidence="1">
    <location>
        <begin position="91"/>
        <end position="92"/>
    </location>
    <ligand>
        <name>substrate</name>
    </ligand>
</feature>
<feature type="binding site" evidence="1">
    <location>
        <begin position="117"/>
        <end position="119"/>
    </location>
    <ligand>
        <name>substrate</name>
    </ligand>
</feature>
<feature type="binding site" evidence="1">
    <location>
        <position position="122"/>
    </location>
    <ligand>
        <name>substrate</name>
    </ligand>
</feature>
<feature type="binding site" evidence="1">
    <location>
        <position position="172"/>
    </location>
    <ligand>
        <name>substrate</name>
    </ligand>
</feature>
<feature type="binding site" evidence="1">
    <location>
        <position position="172"/>
    </location>
    <ligand>
        <name>Zn(2+)</name>
        <dbReference type="ChEBI" id="CHEBI:29105"/>
    </ligand>
</feature>
<feature type="binding site" evidence="1">
    <location>
        <position position="180"/>
    </location>
    <ligand>
        <name>Zn(2+)</name>
        <dbReference type="ChEBI" id="CHEBI:29105"/>
    </ligand>
</feature>
<organism>
    <name type="scientific">Alteromonas mediterranea (strain DSM 17117 / CIP 110805 / LMG 28347 / Deep ecotype)</name>
    <dbReference type="NCBI Taxonomy" id="1774373"/>
    <lineage>
        <taxon>Bacteria</taxon>
        <taxon>Pseudomonadati</taxon>
        <taxon>Pseudomonadota</taxon>
        <taxon>Gammaproteobacteria</taxon>
        <taxon>Alteromonadales</taxon>
        <taxon>Alteromonadaceae</taxon>
        <taxon>Alteromonas/Salinimonas group</taxon>
        <taxon>Alteromonas</taxon>
    </lineage>
</organism>
<gene>
    <name evidence="1" type="primary">gmhA</name>
    <name type="ordered locus">MADE_1015640</name>
</gene>
<keyword id="KW-0119">Carbohydrate metabolism</keyword>
<keyword id="KW-0963">Cytoplasm</keyword>
<keyword id="KW-0413">Isomerase</keyword>
<keyword id="KW-0479">Metal-binding</keyword>
<keyword id="KW-0862">Zinc</keyword>
<protein>
    <recommendedName>
        <fullName evidence="1">Phosphoheptose isomerase</fullName>
        <ecNumber evidence="1">5.3.1.28</ecNumber>
    </recommendedName>
    <alternativeName>
        <fullName evidence="1">Sedoheptulose 7-phosphate isomerase</fullName>
    </alternativeName>
</protein>
<dbReference type="EC" id="5.3.1.28" evidence="1"/>
<dbReference type="EMBL" id="CP001103">
    <property type="protein sequence ID" value="AEA99260.1"/>
    <property type="molecule type" value="Genomic_DNA"/>
</dbReference>
<dbReference type="RefSeq" id="WP_012519552.1">
    <property type="nucleotide sequence ID" value="NC_011138.3"/>
</dbReference>
<dbReference type="SMR" id="B4RXI5"/>
<dbReference type="KEGG" id="amc:MADE_1015640"/>
<dbReference type="HOGENOM" id="CLU_080999_4_0_6"/>
<dbReference type="UniPathway" id="UPA00041">
    <property type="reaction ID" value="UER00436"/>
</dbReference>
<dbReference type="Proteomes" id="UP000001870">
    <property type="component" value="Chromosome"/>
</dbReference>
<dbReference type="GO" id="GO:0005737">
    <property type="term" value="C:cytoplasm"/>
    <property type="evidence" value="ECO:0007669"/>
    <property type="project" value="UniProtKB-SubCell"/>
</dbReference>
<dbReference type="GO" id="GO:0097367">
    <property type="term" value="F:carbohydrate derivative binding"/>
    <property type="evidence" value="ECO:0007669"/>
    <property type="project" value="InterPro"/>
</dbReference>
<dbReference type="GO" id="GO:0008968">
    <property type="term" value="F:D-sedoheptulose 7-phosphate isomerase activity"/>
    <property type="evidence" value="ECO:0007669"/>
    <property type="project" value="UniProtKB-UniRule"/>
</dbReference>
<dbReference type="GO" id="GO:0008270">
    <property type="term" value="F:zinc ion binding"/>
    <property type="evidence" value="ECO:0007669"/>
    <property type="project" value="UniProtKB-UniRule"/>
</dbReference>
<dbReference type="GO" id="GO:0005975">
    <property type="term" value="P:carbohydrate metabolic process"/>
    <property type="evidence" value="ECO:0007669"/>
    <property type="project" value="UniProtKB-UniRule"/>
</dbReference>
<dbReference type="GO" id="GO:2001061">
    <property type="term" value="P:D-glycero-D-manno-heptose 7-phosphate biosynthetic process"/>
    <property type="evidence" value="ECO:0007669"/>
    <property type="project" value="UniProtKB-UniPathway"/>
</dbReference>
<dbReference type="CDD" id="cd05006">
    <property type="entry name" value="SIS_GmhA"/>
    <property type="match status" value="1"/>
</dbReference>
<dbReference type="Gene3D" id="3.40.50.10490">
    <property type="entry name" value="Glucose-6-phosphate isomerase like protein, domain 1"/>
    <property type="match status" value="1"/>
</dbReference>
<dbReference type="HAMAP" id="MF_00067">
    <property type="entry name" value="GmhA"/>
    <property type="match status" value="1"/>
</dbReference>
<dbReference type="InterPro" id="IPR035461">
    <property type="entry name" value="GmhA/DiaA"/>
</dbReference>
<dbReference type="InterPro" id="IPR004515">
    <property type="entry name" value="Phosphoheptose_Isoase"/>
</dbReference>
<dbReference type="InterPro" id="IPR001347">
    <property type="entry name" value="SIS_dom"/>
</dbReference>
<dbReference type="InterPro" id="IPR046348">
    <property type="entry name" value="SIS_dom_sf"/>
</dbReference>
<dbReference type="InterPro" id="IPR050099">
    <property type="entry name" value="SIS_GmhA/DiaA_subfam"/>
</dbReference>
<dbReference type="NCBIfam" id="TIGR00441">
    <property type="entry name" value="gmhA"/>
    <property type="match status" value="1"/>
</dbReference>
<dbReference type="NCBIfam" id="NF010546">
    <property type="entry name" value="PRK13936.1"/>
    <property type="match status" value="1"/>
</dbReference>
<dbReference type="PANTHER" id="PTHR30390:SF6">
    <property type="entry name" value="DNAA INITIATOR-ASSOCIATING PROTEIN DIAA"/>
    <property type="match status" value="1"/>
</dbReference>
<dbReference type="PANTHER" id="PTHR30390">
    <property type="entry name" value="SEDOHEPTULOSE 7-PHOSPHATE ISOMERASE / DNAA INITIATOR-ASSOCIATING FACTOR FOR REPLICATION INITIATION"/>
    <property type="match status" value="1"/>
</dbReference>
<dbReference type="Pfam" id="PF13580">
    <property type="entry name" value="SIS_2"/>
    <property type="match status" value="1"/>
</dbReference>
<dbReference type="SUPFAM" id="SSF53697">
    <property type="entry name" value="SIS domain"/>
    <property type="match status" value="1"/>
</dbReference>
<dbReference type="PROSITE" id="PS51464">
    <property type="entry name" value="SIS"/>
    <property type="match status" value="1"/>
</dbReference>
<reference key="1">
    <citation type="journal article" date="2008" name="ISME J.">
        <title>Comparative genomics of two ecotypes of the marine planktonic copiotroph Alteromonas macleodii suggests alternative lifestyles associated with different kinds of particulate organic matter.</title>
        <authorList>
            <person name="Ivars-Martinez E."/>
            <person name="Martin-Cuadrado A.-B."/>
            <person name="D'Auria G."/>
            <person name="Mira A."/>
            <person name="Ferriera S."/>
            <person name="Johnson J."/>
            <person name="Friedman R."/>
            <person name="Rodriguez-Valera F."/>
        </authorList>
    </citation>
    <scope>NUCLEOTIDE SEQUENCE [LARGE SCALE GENOMIC DNA]</scope>
    <source>
        <strain>DSM 17117 / CIP 110805 / LMG 28347 / Deep ecotype</strain>
    </source>
</reference>
<evidence type="ECO:0000255" key="1">
    <source>
        <dbReference type="HAMAP-Rule" id="MF_00067"/>
    </source>
</evidence>
<accession>B4RXI5</accession>
<accession>F2GDC4</accession>